<accession>B4JHP4</accession>
<evidence type="ECO:0000250" key="1">
    <source>
        <dbReference type="UniProtKB" id="Q9VBX2"/>
    </source>
</evidence>
<evidence type="ECO:0000255" key="2">
    <source>
        <dbReference type="HAMAP-Rule" id="MF_03052"/>
    </source>
</evidence>
<keyword id="KW-0963">Cytoplasm</keyword>
<keyword id="KW-0501">Molybdenum cofactor biosynthesis</keyword>
<keyword id="KW-1185">Reference proteome</keyword>
<keyword id="KW-0808">Transferase</keyword>
<feature type="chain" id="PRO_0000369335" description="Molybdopterin synthase catalytic subunit">
    <location>
        <begin position="1"/>
        <end position="362"/>
    </location>
</feature>
<feature type="binding site" evidence="2">
    <location>
        <begin position="101"/>
        <end position="102"/>
    </location>
    <ligand>
        <name>substrate</name>
    </ligand>
</feature>
<feature type="binding site" evidence="2">
    <location>
        <position position="117"/>
    </location>
    <ligand>
        <name>substrate</name>
    </ligand>
</feature>
<feature type="binding site" evidence="2">
    <location>
        <begin position="124"/>
        <end position="126"/>
    </location>
    <ligand>
        <name>substrate</name>
    </ligand>
</feature>
<dbReference type="EC" id="2.8.1.12" evidence="2"/>
<dbReference type="EMBL" id="CH916369">
    <property type="protein sequence ID" value="EDV93883.1"/>
    <property type="molecule type" value="Genomic_DNA"/>
</dbReference>
<dbReference type="RefSeq" id="XP_001990821.1">
    <property type="nucleotide sequence ID" value="XM_001990785.1"/>
</dbReference>
<dbReference type="SMR" id="B4JHP4"/>
<dbReference type="FunCoup" id="B4JHP4">
    <property type="interactions" value="607"/>
</dbReference>
<dbReference type="STRING" id="7222.B4JHP4"/>
<dbReference type="eggNOG" id="KOG3307">
    <property type="taxonomic scope" value="Eukaryota"/>
</dbReference>
<dbReference type="HOGENOM" id="CLU_045449_0_0_1"/>
<dbReference type="InParanoid" id="B4JHP4"/>
<dbReference type="OMA" id="KIRSQWN"/>
<dbReference type="OrthoDB" id="5531344at2759"/>
<dbReference type="PhylomeDB" id="B4JHP4"/>
<dbReference type="UniPathway" id="UPA00344"/>
<dbReference type="Proteomes" id="UP000001070">
    <property type="component" value="Unassembled WGS sequence"/>
</dbReference>
<dbReference type="GO" id="GO:0005829">
    <property type="term" value="C:cytosol"/>
    <property type="evidence" value="ECO:0000250"/>
    <property type="project" value="UniProtKB"/>
</dbReference>
<dbReference type="GO" id="GO:1990140">
    <property type="term" value="C:molybdopterin synthase complex"/>
    <property type="evidence" value="ECO:0000250"/>
    <property type="project" value="UniProtKB"/>
</dbReference>
<dbReference type="GO" id="GO:0030366">
    <property type="term" value="F:molybdopterin synthase activity"/>
    <property type="evidence" value="ECO:0007669"/>
    <property type="project" value="UniProtKB-UniRule"/>
</dbReference>
<dbReference type="GO" id="GO:0006777">
    <property type="term" value="P:Mo-molybdopterin cofactor biosynthetic process"/>
    <property type="evidence" value="ECO:0000250"/>
    <property type="project" value="UniProtKB"/>
</dbReference>
<dbReference type="CDD" id="cd00756">
    <property type="entry name" value="MoaE"/>
    <property type="match status" value="1"/>
</dbReference>
<dbReference type="FunFam" id="3.90.1170.40:FF:000002">
    <property type="entry name" value="Molybdopterin synthase catalytic subunit"/>
    <property type="match status" value="1"/>
</dbReference>
<dbReference type="Gene3D" id="3.90.1170.40">
    <property type="entry name" value="Molybdopterin biosynthesis MoaE subunit"/>
    <property type="match status" value="1"/>
</dbReference>
<dbReference type="HAMAP" id="MF_03052">
    <property type="entry name" value="MOC2B"/>
    <property type="match status" value="1"/>
</dbReference>
<dbReference type="InterPro" id="IPR036563">
    <property type="entry name" value="MoaE_sf"/>
</dbReference>
<dbReference type="InterPro" id="IPR028888">
    <property type="entry name" value="MOCS2B_euk"/>
</dbReference>
<dbReference type="InterPro" id="IPR003448">
    <property type="entry name" value="Mopterin_biosynth_MoaE"/>
</dbReference>
<dbReference type="PANTHER" id="PTHR23404">
    <property type="entry name" value="MOLYBDOPTERIN SYNTHASE RELATED"/>
    <property type="match status" value="1"/>
</dbReference>
<dbReference type="Pfam" id="PF02391">
    <property type="entry name" value="MoaE"/>
    <property type="match status" value="1"/>
</dbReference>
<dbReference type="SUPFAM" id="SSF54690">
    <property type="entry name" value="Molybdopterin synthase subunit MoaE"/>
    <property type="match status" value="1"/>
</dbReference>
<protein>
    <recommendedName>
        <fullName evidence="2">Molybdopterin synthase catalytic subunit</fullName>
        <ecNumber evidence="2">2.8.1.12</ecNumber>
    </recommendedName>
    <alternativeName>
        <fullName evidence="2">Molybdenum cofactor synthesis protein 2 large subunit</fullName>
    </alternativeName>
    <alternativeName>
        <fullName evidence="2">Molybdenum cofactor synthesis protein 2B</fullName>
        <shortName evidence="2">MOCS2B</shortName>
    </alternativeName>
</protein>
<name>MOC2B_DROGR</name>
<gene>
    <name evidence="1" type="primary">Mocs2B</name>
    <name evidence="2" type="synonym">Mocs2</name>
    <name type="ORF">GH19575</name>
</gene>
<proteinExistence type="inferred from homology"/>
<organism>
    <name type="scientific">Drosophila grimshawi</name>
    <name type="common">Hawaiian fruit fly</name>
    <name type="synonym">Idiomyia grimshawi</name>
    <dbReference type="NCBI Taxonomy" id="7222"/>
    <lineage>
        <taxon>Eukaryota</taxon>
        <taxon>Metazoa</taxon>
        <taxon>Ecdysozoa</taxon>
        <taxon>Arthropoda</taxon>
        <taxon>Hexapoda</taxon>
        <taxon>Insecta</taxon>
        <taxon>Pterygota</taxon>
        <taxon>Neoptera</taxon>
        <taxon>Endopterygota</taxon>
        <taxon>Diptera</taxon>
        <taxon>Brachycera</taxon>
        <taxon>Muscomorpha</taxon>
        <taxon>Ephydroidea</taxon>
        <taxon>Drosophilidae</taxon>
        <taxon>Drosophila</taxon>
        <taxon>Hawaiian Drosophila</taxon>
    </lineage>
</organism>
<sequence>MDHIQLVNSQIDINHIHNLLIDESCGASSVFVGTTRDNFDGKKVISLEYESYEKMALKEMSKICSQLRARWPDLKHIAIYHRLGTVPVKEASVVIATSAPHRAAALESVTFAVEQLKSRVPIWKKEIYENDTIGEWKENMECPWPQYSKASLRTFDFSSCKIKQTIENIPDKLVQIRVNDSDLNKRVKCFLKRKRDEINLHNINDFKQQSSQIPCEETTTFSCARTQSFLVKQQQSSGHLKVRRANNCCGPQVRPNYSLQLNKLMTPQSDCDDLIEYKLGNSRLRNIEAYMCVSPDDDNILNRIKNIEDRILLIESTSPEYKHFVQFGTDSEKTCLKKPKKEVYLTDRINEFLTKIKREIEQ</sequence>
<comment type="function">
    <text evidence="2">Catalytic subunit of the molybdopterin synthase complex, a complex that catalyzes the conversion of precursor Z into molybdopterin. Acts by mediating the incorporation of 2 sulfur atoms from thiocarboxylated Mocs2A into precursor Z to generate a dithiolene group.</text>
</comment>
<comment type="catalytic activity">
    <reaction evidence="2">
        <text>2 [molybdopterin-synthase sulfur-carrier protein]-C-terminal-Gly-aminoethanethioate + cyclic pyranopterin phosphate + H2O = molybdopterin + 2 [molybdopterin-synthase sulfur-carrier protein]-C-terminal Gly-Gly + 2 H(+)</text>
        <dbReference type="Rhea" id="RHEA:26333"/>
        <dbReference type="Rhea" id="RHEA-COMP:12202"/>
        <dbReference type="Rhea" id="RHEA-COMP:19907"/>
        <dbReference type="ChEBI" id="CHEBI:15377"/>
        <dbReference type="ChEBI" id="CHEBI:15378"/>
        <dbReference type="ChEBI" id="CHEBI:58698"/>
        <dbReference type="ChEBI" id="CHEBI:59648"/>
        <dbReference type="ChEBI" id="CHEBI:90778"/>
        <dbReference type="ChEBI" id="CHEBI:232372"/>
        <dbReference type="EC" id="2.8.1.12"/>
    </reaction>
</comment>
<comment type="pathway">
    <text evidence="2">Cofactor biosynthesis; molybdopterin biosynthesis.</text>
</comment>
<comment type="subunit">
    <text evidence="2">Heterotetramer; composed of 2 small (Mocs2A) and 2 large (Mocs2B) subunits.</text>
</comment>
<comment type="subcellular location">
    <subcellularLocation>
        <location evidence="2">Cytoplasm</location>
    </subcellularLocation>
</comment>
<comment type="miscellaneous">
    <text>This protein is produced by a bicistronic gene which also produces the small subunit (Mocs2A).</text>
</comment>
<comment type="similarity">
    <text evidence="2">Belongs to the MoaE family. MOCS2B subfamily.</text>
</comment>
<reference key="1">
    <citation type="journal article" date="2007" name="Nature">
        <title>Evolution of genes and genomes on the Drosophila phylogeny.</title>
        <authorList>
            <consortium name="Drosophila 12 genomes consortium"/>
        </authorList>
    </citation>
    <scope>NUCLEOTIDE SEQUENCE [LARGE SCALE GENOMIC DNA]</scope>
    <source>
        <strain>Tucson 15287-2541.00</strain>
    </source>
</reference>